<evidence type="ECO:0000250" key="1"/>
<evidence type="ECO:0000255" key="2"/>
<evidence type="ECO:0000305" key="3"/>
<keyword id="KW-1003">Cell membrane</keyword>
<keyword id="KW-0472">Membrane</keyword>
<keyword id="KW-1185">Reference proteome</keyword>
<keyword id="KW-0812">Transmembrane</keyword>
<keyword id="KW-1133">Transmembrane helix</keyword>
<comment type="subunit">
    <text evidence="1">Homodimer and heterodimers.</text>
</comment>
<comment type="subcellular location">
    <subcellularLocation>
        <location evidence="1">Cell membrane</location>
        <topology evidence="1">Multi-pass membrane protein</topology>
    </subcellularLocation>
</comment>
<comment type="similarity">
    <text evidence="3">Belongs to the Casparian strip membrane proteins (CASP) family.</text>
</comment>
<feature type="chain" id="PRO_0000391534" description="CASP-like protein 4C3">
    <location>
        <begin position="1"/>
        <end position="191"/>
    </location>
</feature>
<feature type="topological domain" description="Cytoplasmic" evidence="2">
    <location>
        <begin position="1"/>
        <end position="29"/>
    </location>
</feature>
<feature type="transmembrane region" description="Helical" evidence="2">
    <location>
        <begin position="30"/>
        <end position="50"/>
    </location>
</feature>
<feature type="topological domain" description="Extracellular" evidence="2">
    <location>
        <begin position="51"/>
        <end position="72"/>
    </location>
</feature>
<feature type="transmembrane region" description="Helical" evidence="2">
    <location>
        <begin position="73"/>
        <end position="93"/>
    </location>
</feature>
<feature type="topological domain" description="Cytoplasmic" evidence="2">
    <location>
        <begin position="94"/>
        <end position="116"/>
    </location>
</feature>
<feature type="transmembrane region" description="Helical" evidence="2">
    <location>
        <begin position="117"/>
        <end position="137"/>
    </location>
</feature>
<feature type="topological domain" description="Extracellular" evidence="2">
    <location>
        <begin position="138"/>
        <end position="162"/>
    </location>
</feature>
<feature type="transmembrane region" description="Helical" evidence="2">
    <location>
        <begin position="163"/>
        <end position="183"/>
    </location>
</feature>
<feature type="topological domain" description="Cytoplasmic" evidence="2">
    <location>
        <begin position="184"/>
        <end position="191"/>
    </location>
</feature>
<sequence>METGDSAVKSSQDVHYYGKSTAQKHRRSNGIILIFRALTFSFSLTSVIVMGTNRHRIDAQSRVAWYDFDPFRYVLAVNAIICIYSFVEIWLAVYTYLKDTLFLPETFQVWFDYGHDQGFAYLLFSANSAGIAMAQLLQSGNSLIHGAYRCSDAGVFCTQARASIGLGFGAFLFLALSSLLTGLRVARWYFS</sequence>
<organism>
    <name type="scientific">Physcomitrium patens</name>
    <name type="common">Spreading-leaved earth moss</name>
    <name type="synonym">Physcomitrella patens</name>
    <dbReference type="NCBI Taxonomy" id="3218"/>
    <lineage>
        <taxon>Eukaryota</taxon>
        <taxon>Viridiplantae</taxon>
        <taxon>Streptophyta</taxon>
        <taxon>Embryophyta</taxon>
        <taxon>Bryophyta</taxon>
        <taxon>Bryophytina</taxon>
        <taxon>Bryopsida</taxon>
        <taxon>Funariidae</taxon>
        <taxon>Funariales</taxon>
        <taxon>Funariaceae</taxon>
        <taxon>Physcomitrium</taxon>
    </lineage>
</organism>
<name>CSPL8_PHYPA</name>
<accession>A9T836</accession>
<dbReference type="EMBL" id="DS545070">
    <property type="protein sequence ID" value="EDQ60428.1"/>
    <property type="molecule type" value="Genomic_DNA"/>
</dbReference>
<dbReference type="RefSeq" id="XP_001774757.1">
    <property type="nucleotide sequence ID" value="XM_001774705.1"/>
</dbReference>
<dbReference type="FunCoup" id="A9T836">
    <property type="interactions" value="415"/>
</dbReference>
<dbReference type="PaxDb" id="3218-PP1S181_92V6.1"/>
<dbReference type="EnsemblPlants" id="Pp3c10_18090V3.1">
    <property type="protein sequence ID" value="Pp3c10_18090V3.1"/>
    <property type="gene ID" value="Pp3c10_18090"/>
</dbReference>
<dbReference type="EnsemblPlants" id="Pp3c10_18090V3.2">
    <property type="protein sequence ID" value="Pp3c10_18090V3.2"/>
    <property type="gene ID" value="Pp3c10_18090"/>
</dbReference>
<dbReference type="Gramene" id="Pp3c10_18090V3.1">
    <property type="protein sequence ID" value="Pp3c10_18090V3.1"/>
    <property type="gene ID" value="Pp3c10_18090"/>
</dbReference>
<dbReference type="Gramene" id="Pp3c10_18090V3.2">
    <property type="protein sequence ID" value="Pp3c10_18090V3.2"/>
    <property type="gene ID" value="Pp3c10_18090"/>
</dbReference>
<dbReference type="eggNOG" id="ENOG502QQ76">
    <property type="taxonomic scope" value="Eukaryota"/>
</dbReference>
<dbReference type="HOGENOM" id="CLU_1484566_0_0_1"/>
<dbReference type="InParanoid" id="A9T836"/>
<dbReference type="OMA" id="FRVACFI"/>
<dbReference type="OrthoDB" id="1907587at2759"/>
<dbReference type="Proteomes" id="UP000006727">
    <property type="component" value="Chromosome 10"/>
</dbReference>
<dbReference type="GO" id="GO:0005886">
    <property type="term" value="C:plasma membrane"/>
    <property type="evidence" value="ECO:0007669"/>
    <property type="project" value="UniProtKB-SubCell"/>
</dbReference>
<dbReference type="InterPro" id="IPR006459">
    <property type="entry name" value="CASP/CASPL"/>
</dbReference>
<dbReference type="InterPro" id="IPR006702">
    <property type="entry name" value="CASP_dom"/>
</dbReference>
<dbReference type="NCBIfam" id="TIGR01569">
    <property type="entry name" value="A_tha_TIGR01569"/>
    <property type="match status" value="1"/>
</dbReference>
<dbReference type="PANTHER" id="PTHR33573">
    <property type="entry name" value="CASP-LIKE PROTEIN 4A4"/>
    <property type="match status" value="1"/>
</dbReference>
<dbReference type="PANTHER" id="PTHR33573:SF56">
    <property type="entry name" value="CASP-LIKE PROTEIN 4C1"/>
    <property type="match status" value="1"/>
</dbReference>
<dbReference type="Pfam" id="PF04535">
    <property type="entry name" value="CASP_dom"/>
    <property type="match status" value="1"/>
</dbReference>
<reference key="1">
    <citation type="journal article" date="2008" name="Science">
        <title>The Physcomitrella genome reveals evolutionary insights into the conquest of land by plants.</title>
        <authorList>
            <person name="Rensing S.A."/>
            <person name="Lang D."/>
            <person name="Zimmer A.D."/>
            <person name="Terry A."/>
            <person name="Salamov A."/>
            <person name="Shapiro H."/>
            <person name="Nishiyama T."/>
            <person name="Perroud P.-F."/>
            <person name="Lindquist E.A."/>
            <person name="Kamisugi Y."/>
            <person name="Tanahashi T."/>
            <person name="Sakakibara K."/>
            <person name="Fujita T."/>
            <person name="Oishi K."/>
            <person name="Shin-I T."/>
            <person name="Kuroki Y."/>
            <person name="Toyoda A."/>
            <person name="Suzuki Y."/>
            <person name="Hashimoto S.-I."/>
            <person name="Yamaguchi K."/>
            <person name="Sugano S."/>
            <person name="Kohara Y."/>
            <person name="Fujiyama A."/>
            <person name="Anterola A."/>
            <person name="Aoki S."/>
            <person name="Ashton N."/>
            <person name="Barbazuk W.B."/>
            <person name="Barker E."/>
            <person name="Bennetzen J.L."/>
            <person name="Blankenship R."/>
            <person name="Cho S.H."/>
            <person name="Dutcher S.K."/>
            <person name="Estelle M."/>
            <person name="Fawcett J.A."/>
            <person name="Gundlach H."/>
            <person name="Hanada K."/>
            <person name="Heyl A."/>
            <person name="Hicks K.A."/>
            <person name="Hughes J."/>
            <person name="Lohr M."/>
            <person name="Mayer K."/>
            <person name="Melkozernov A."/>
            <person name="Murata T."/>
            <person name="Nelson D.R."/>
            <person name="Pils B."/>
            <person name="Prigge M."/>
            <person name="Reiss B."/>
            <person name="Renner T."/>
            <person name="Rombauts S."/>
            <person name="Rushton P.J."/>
            <person name="Sanderfoot A."/>
            <person name="Schween G."/>
            <person name="Shiu S.-H."/>
            <person name="Stueber K."/>
            <person name="Theodoulou F.L."/>
            <person name="Tu H."/>
            <person name="Van de Peer Y."/>
            <person name="Verrier P.J."/>
            <person name="Waters E."/>
            <person name="Wood A."/>
            <person name="Yang L."/>
            <person name="Cove D."/>
            <person name="Cuming A.C."/>
            <person name="Hasebe M."/>
            <person name="Lucas S."/>
            <person name="Mishler B.D."/>
            <person name="Reski R."/>
            <person name="Grigoriev I.V."/>
            <person name="Quatrano R.S."/>
            <person name="Boore J.L."/>
        </authorList>
    </citation>
    <scope>NUCLEOTIDE SEQUENCE [LARGE SCALE GENOMIC DNA]</scope>
    <source>
        <strain>cv. Gransden 2004</strain>
    </source>
</reference>
<reference key="2">
    <citation type="journal article" date="2014" name="Plant Physiol.">
        <title>Functional and evolutionary analysis of the CASPARIAN STRIP MEMBRANE DOMAIN PROTEIN family.</title>
        <authorList>
            <person name="Roppolo D."/>
            <person name="Boeckmann B."/>
            <person name="Pfister A."/>
            <person name="Boutet E."/>
            <person name="Rubio M.C."/>
            <person name="Denervaud-Tendon V."/>
            <person name="Vermeer J.E."/>
            <person name="Gheyselinck J."/>
            <person name="Xenarios I."/>
            <person name="Geldner N."/>
        </authorList>
    </citation>
    <scope>GENE FAMILY</scope>
    <scope>NOMENCLATURE</scope>
</reference>
<protein>
    <recommendedName>
        <fullName>CASP-like protein 4C3</fullName>
        <shortName>PpCASPL4C3</shortName>
    </recommendedName>
</protein>
<proteinExistence type="evidence at transcript level"/>
<gene>
    <name type="ORF">PHYPADRAFT_192523</name>
</gene>